<gene>
    <name type="primary">UQCRFS1</name>
</gene>
<proteinExistence type="inferred from homology"/>
<feature type="chain" id="PRO_0000307242" description="Cytochrome b-c1 complex subunit 9" evidence="5">
    <location>
        <begin position="1"/>
        <end position="78"/>
    </location>
</feature>
<feature type="chain" id="PRO_0000030665" description="Cytochrome b-c1 complex subunit Rieske, mitochondrial">
    <location>
        <begin position="79"/>
        <end position="274"/>
    </location>
</feature>
<feature type="topological domain" description="Mitochondrial matrix" evidence="2">
    <location>
        <begin position="79"/>
        <end position="103"/>
    </location>
</feature>
<feature type="transmembrane region" description="Helical" evidence="2">
    <location>
        <begin position="104"/>
        <end position="140"/>
    </location>
</feature>
<feature type="topological domain" description="Mitochondrial intermembrane" evidence="2">
    <location>
        <begin position="141"/>
        <end position="274"/>
    </location>
</feature>
<feature type="domain" description="Rieske" evidence="6">
    <location>
        <begin position="187"/>
        <end position="272"/>
    </location>
</feature>
<feature type="binding site" evidence="2">
    <location>
        <position position="217"/>
    </location>
    <ligand>
        <name>[2Fe-2S] cluster</name>
        <dbReference type="ChEBI" id="CHEBI:190135"/>
    </ligand>
</feature>
<feature type="binding site" evidence="2">
    <location>
        <position position="219"/>
    </location>
    <ligand>
        <name>[2Fe-2S] cluster</name>
        <dbReference type="ChEBI" id="CHEBI:190135"/>
    </ligand>
</feature>
<feature type="binding site" evidence="2">
    <location>
        <position position="236"/>
    </location>
    <ligand>
        <name>[2Fe-2S] cluster</name>
        <dbReference type="ChEBI" id="CHEBI:190135"/>
    </ligand>
</feature>
<feature type="binding site" evidence="2">
    <location>
        <position position="239"/>
    </location>
    <ligand>
        <name>[2Fe-2S] cluster</name>
        <dbReference type="ChEBI" id="CHEBI:190135"/>
    </ligand>
</feature>
<feature type="binding site" evidence="2">
    <location>
        <position position="241"/>
    </location>
    <ligand>
        <name>[2Fe-2S] cluster</name>
        <dbReference type="ChEBI" id="CHEBI:190135"/>
    </ligand>
</feature>
<feature type="disulfide bond" evidence="2">
    <location>
        <begin position="222"/>
        <end position="238"/>
    </location>
</feature>
<evidence type="ECO:0000250" key="1">
    <source>
        <dbReference type="UniProtKB" id="P08067"/>
    </source>
</evidence>
<evidence type="ECO:0000250" key="2">
    <source>
        <dbReference type="UniProtKB" id="P13272"/>
    </source>
</evidence>
<evidence type="ECO:0000250" key="3">
    <source>
        <dbReference type="UniProtKB" id="P47985"/>
    </source>
</evidence>
<evidence type="ECO:0000250" key="4">
    <source>
        <dbReference type="UniProtKB" id="Q5ZLR5"/>
    </source>
</evidence>
<evidence type="ECO:0000250" key="5">
    <source>
        <dbReference type="UniProtKB" id="Q9CR68"/>
    </source>
</evidence>
<evidence type="ECO:0000255" key="6">
    <source>
        <dbReference type="PROSITE-ProRule" id="PRU00628"/>
    </source>
</evidence>
<evidence type="ECO:0000305" key="7"/>
<name>UCRI_SYMSY</name>
<reference key="1">
    <citation type="submission" date="2003-09" db="EMBL/GenBank/DDBJ databases">
        <title>Molecular evolution of the iron sulfur protein and subunit 9 of complex III of the electron transport chain in primates.</title>
        <authorList>
            <person name="Doan J.W."/>
            <person name="Wildman D.E."/>
            <person name="Schmidt T.R."/>
            <person name="Weiss M.L."/>
            <person name="Goodman M."/>
            <person name="Grossman L.I."/>
        </authorList>
    </citation>
    <scope>NUCLEOTIDE SEQUENCE [GENOMIC DNA]</scope>
</reference>
<protein>
    <recommendedName>
        <fullName>Cytochrome b-c1 complex subunit Rieske, mitochondrial</fullName>
        <ecNumber>7.1.1.8</ecNumber>
    </recommendedName>
    <alternativeName>
        <fullName>Complex III subunit 5</fullName>
    </alternativeName>
    <alternativeName>
        <fullName>Cytochrome b-c1 complex subunit 5</fullName>
    </alternativeName>
    <alternativeName>
        <fullName>Rieske iron-sulfur protein</fullName>
        <shortName>RISP</shortName>
    </alternativeName>
    <alternativeName>
        <fullName evidence="7">Rieske protein UQCRFS1</fullName>
    </alternativeName>
    <alternativeName>
        <fullName>Ubiquinol-cytochrome c reductase iron-sulfur subunit</fullName>
    </alternativeName>
    <component>
        <recommendedName>
            <fullName evidence="2">Cytochrome b-c1 complex subunit 9</fullName>
            <shortName evidence="2">Su9</shortName>
            <shortName evidence="2">Subunit 9</shortName>
        </recommendedName>
        <alternativeName>
            <fullName evidence="2">8 kDa subunit 9</fullName>
        </alternativeName>
        <alternativeName>
            <fullName>Complex III subunit IX</fullName>
        </alternativeName>
        <alternativeName>
            <fullName>Cytochrome b-c1 complex subunit 11</fullName>
        </alternativeName>
        <alternativeName>
            <fullName>UQCRFS1 mitochondrial targeting sequence</fullName>
            <shortName>UQCRFS1 MTS</shortName>
        </alternativeName>
        <alternativeName>
            <fullName evidence="2">Ubiquinol-cytochrome c reductase 8 kDa protein</fullName>
        </alternativeName>
    </component>
</protein>
<accession>Q69BJ6</accession>
<sequence>MLSVAARSGPFAPVLSATSRGVAGALRPLVQATVPATPEQPVLDLKRPFLSRESLSGQAVRRPLVASVGLNVPASVCYSHTDVKVPDFSEYRRPEVLDSTKSSRESSEARKGFSYLVTAVTTVGVAYAAKNAVTQFVSSMSASADVLALAKIEIKLSDIPEGKNMAFKWRGKPLFVRHRTQKEIEQEAAVELSQLRDPQHDLDRVKRPEWVILIGVCTHLGCVPIANAGDFGGYYCPCHGSHYDASGRIRLGPAPLNLEVPTYEFTSDDMVIVG</sequence>
<organism>
    <name type="scientific">Symphalangus syndactylus</name>
    <name type="common">Siamang</name>
    <name type="synonym">Hylobates syndactylus</name>
    <dbReference type="NCBI Taxonomy" id="9590"/>
    <lineage>
        <taxon>Eukaryota</taxon>
        <taxon>Metazoa</taxon>
        <taxon>Chordata</taxon>
        <taxon>Craniata</taxon>
        <taxon>Vertebrata</taxon>
        <taxon>Euteleostomi</taxon>
        <taxon>Mammalia</taxon>
        <taxon>Eutheria</taxon>
        <taxon>Euarchontoglires</taxon>
        <taxon>Primates</taxon>
        <taxon>Haplorrhini</taxon>
        <taxon>Catarrhini</taxon>
        <taxon>Hylobatidae</taxon>
        <taxon>Symphalangus</taxon>
    </lineage>
</organism>
<dbReference type="EC" id="7.1.1.8"/>
<dbReference type="EMBL" id="AY387516">
    <property type="protein sequence ID" value="AAR32729.1"/>
    <property type="molecule type" value="Genomic_DNA"/>
</dbReference>
<dbReference type="EMBL" id="AY387515">
    <property type="protein sequence ID" value="AAR32729.1"/>
    <property type="status" value="JOINED"/>
    <property type="molecule type" value="Genomic_DNA"/>
</dbReference>
<dbReference type="RefSeq" id="XP_055093164.1">
    <property type="nucleotide sequence ID" value="XM_055237189.2"/>
</dbReference>
<dbReference type="SMR" id="Q69BJ6"/>
<dbReference type="GeneID" id="129459892"/>
<dbReference type="GO" id="GO:0005743">
    <property type="term" value="C:mitochondrial inner membrane"/>
    <property type="evidence" value="ECO:0007669"/>
    <property type="project" value="UniProtKB-SubCell"/>
</dbReference>
<dbReference type="GO" id="GO:0005739">
    <property type="term" value="C:mitochondrion"/>
    <property type="evidence" value="ECO:0000250"/>
    <property type="project" value="UniProtKB"/>
</dbReference>
<dbReference type="GO" id="GO:0051537">
    <property type="term" value="F:2 iron, 2 sulfur cluster binding"/>
    <property type="evidence" value="ECO:0007669"/>
    <property type="project" value="UniProtKB-KW"/>
</dbReference>
<dbReference type="GO" id="GO:0046872">
    <property type="term" value="F:metal ion binding"/>
    <property type="evidence" value="ECO:0007669"/>
    <property type="project" value="UniProtKB-KW"/>
</dbReference>
<dbReference type="GO" id="GO:0008121">
    <property type="term" value="F:ubiquinol-cytochrome-c reductase activity"/>
    <property type="evidence" value="ECO:0007669"/>
    <property type="project" value="UniProtKB-EC"/>
</dbReference>
<dbReference type="GO" id="GO:0022904">
    <property type="term" value="P:respiratory electron transport chain"/>
    <property type="evidence" value="ECO:0000250"/>
    <property type="project" value="UniProtKB"/>
</dbReference>
<dbReference type="CDD" id="cd03470">
    <property type="entry name" value="Rieske_cytochrome_bc1"/>
    <property type="match status" value="1"/>
</dbReference>
<dbReference type="FunFam" id="1.20.5.270:FF:000001">
    <property type="entry name" value="Cytochrome b-c1 complex subunit Rieske, mitochondrial"/>
    <property type="match status" value="1"/>
</dbReference>
<dbReference type="FunFam" id="2.10.210.10:FF:000001">
    <property type="entry name" value="Cytochrome b-c1 complex subunit Rieske, mitochondrial"/>
    <property type="match status" value="1"/>
</dbReference>
<dbReference type="FunFam" id="2.102.10.10:FF:000001">
    <property type="entry name" value="Cytochrome b-c1 complex subunit Rieske, mitochondrial"/>
    <property type="match status" value="1"/>
</dbReference>
<dbReference type="Gene3D" id="2.10.210.10">
    <property type="entry name" value="Cytochrome Bc1 Complex, Chain I"/>
    <property type="match status" value="1"/>
</dbReference>
<dbReference type="Gene3D" id="2.102.10.10">
    <property type="entry name" value="Rieske [2Fe-2S] iron-sulphur domain"/>
    <property type="match status" value="1"/>
</dbReference>
<dbReference type="Gene3D" id="1.20.5.270">
    <property type="entry name" value="Ubiquinol cytochrome reductase, transmembrane domain"/>
    <property type="match status" value="1"/>
</dbReference>
<dbReference type="InterPro" id="IPR037008">
    <property type="entry name" value="bc1_Rieske_TM_sf"/>
</dbReference>
<dbReference type="InterPro" id="IPR011070">
    <property type="entry name" value="Globular_prot_asu/bsu"/>
</dbReference>
<dbReference type="InterPro" id="IPR017941">
    <property type="entry name" value="Rieske_2Fe-2S"/>
</dbReference>
<dbReference type="InterPro" id="IPR036922">
    <property type="entry name" value="Rieske_2Fe-2S_sf"/>
</dbReference>
<dbReference type="InterPro" id="IPR014349">
    <property type="entry name" value="Rieske_Fe-S_prot"/>
</dbReference>
<dbReference type="InterPro" id="IPR005805">
    <property type="entry name" value="Rieske_Fe-S_prot_C"/>
</dbReference>
<dbReference type="InterPro" id="IPR004192">
    <property type="entry name" value="Rieske_TM"/>
</dbReference>
<dbReference type="InterPro" id="IPR006317">
    <property type="entry name" value="Ubiquinol_cyt_c_Rdtase_Fe-S-su"/>
</dbReference>
<dbReference type="InterPro" id="IPR015248">
    <property type="entry name" value="UQCRFS1_N"/>
</dbReference>
<dbReference type="NCBIfam" id="TIGR01416">
    <property type="entry name" value="Rieske_proteo"/>
    <property type="match status" value="1"/>
</dbReference>
<dbReference type="PANTHER" id="PTHR10134">
    <property type="entry name" value="CYTOCHROME B-C1 COMPLEX SUBUNIT RIESKE, MITOCHONDRIAL"/>
    <property type="match status" value="1"/>
</dbReference>
<dbReference type="Pfam" id="PF00355">
    <property type="entry name" value="Rieske"/>
    <property type="match status" value="1"/>
</dbReference>
<dbReference type="Pfam" id="PF09165">
    <property type="entry name" value="Ubiq-Cytc-red_N"/>
    <property type="match status" value="1"/>
</dbReference>
<dbReference type="Pfam" id="PF02921">
    <property type="entry name" value="UCR_TM"/>
    <property type="match status" value="1"/>
</dbReference>
<dbReference type="PRINTS" id="PR00162">
    <property type="entry name" value="RIESKE"/>
</dbReference>
<dbReference type="SUPFAM" id="SSF50022">
    <property type="entry name" value="ISP domain"/>
    <property type="match status" value="1"/>
</dbReference>
<dbReference type="SUPFAM" id="SSF81502">
    <property type="entry name" value="ISP transmembrane anchor"/>
    <property type="match status" value="1"/>
</dbReference>
<dbReference type="SUPFAM" id="SSF56568">
    <property type="entry name" value="Non-globular alpha+beta subunits of globular proteins"/>
    <property type="match status" value="1"/>
</dbReference>
<dbReference type="PROSITE" id="PS51296">
    <property type="entry name" value="RIESKE"/>
    <property type="match status" value="1"/>
</dbReference>
<keyword id="KW-0001">2Fe-2S</keyword>
<keyword id="KW-1015">Disulfide bond</keyword>
<keyword id="KW-0249">Electron transport</keyword>
<keyword id="KW-0408">Iron</keyword>
<keyword id="KW-0411">Iron-sulfur</keyword>
<keyword id="KW-0472">Membrane</keyword>
<keyword id="KW-0479">Metal-binding</keyword>
<keyword id="KW-0496">Mitochondrion</keyword>
<keyword id="KW-0999">Mitochondrion inner membrane</keyword>
<keyword id="KW-0679">Respiratory chain</keyword>
<keyword id="KW-0809">Transit peptide</keyword>
<keyword id="KW-1278">Translocase</keyword>
<keyword id="KW-0812">Transmembrane</keyword>
<keyword id="KW-1133">Transmembrane helix</keyword>
<keyword id="KW-0813">Transport</keyword>
<comment type="function">
    <molecule>Cytochrome b-c1 complex subunit Rieske, mitochondrial</molecule>
    <text evidence="1 3">Component of the ubiquinol-cytochrome c oxidoreductase, a multisubunit transmembrane complex that is part of the mitochondrial electron transport chain which drives oxidative phosphorylation. The respiratory chain contains 3 multisubunit complexes succinate dehydrogenase (complex II, CII), ubiquinol-cytochrome c oxidoreductase (cytochrome b-c1 complex, complex III, CIII) and cytochrome c oxidase (complex IV, CIV), that cooperate to transfer electrons derived from NADH and succinate to molecular oxygen, creating an electrochemical gradient over the inner membrane that drives transmembrane transport and the ATP synthase. The cytochrome b-c1 complex catalyzes electron transfer from ubiquinol to cytochrome c, linking this redox reaction to translocation of protons across the mitochondrial inner membrane, with protons being carried across the membrane as hydrogens on the quinol. In the process called Q cycle, 2 protons are consumed from the matrix, 4 protons are released into the intermembrane space and 2 electrons are passed to cytochrome c. The Rieske protein is a catalytic core subunit containing a [2Fe-2S] iron-sulfur cluster. It cycles between 2 conformational states during catalysis to transfer electrons from the quinol bound in the Q(0) site in cytochrome b to cytochrome c1 (By similarity). Incorporation of UQCRFS1 is the penultimate step in complex III assembly (By similarity).</text>
</comment>
<comment type="function">
    <molecule>Cytochrome b-c1 complex subunit 9</molecule>
    <text evidence="2 3 5">Component of the ubiquinol-cytochrome c oxidoreductase (cytochrome b-c1 complex, complex III, CIII). UQCRFS1 undergoes proteolytic processing once it is incorporated in the complex III dimer. One of the fragments, called subunit 9, corresponds to its mitochondrial targeting sequence (MTS) (By similarity). The proteolytic processing is necessary for the correct insertion of UQCRFS1 in the complex III dimer, but the persistence of UQCRFS1-derived fragments may prevent newly imported UQCRFS1 to be processed and assembled into complex III and is detrimental for the complex III structure and function (By similarity).</text>
</comment>
<comment type="catalytic activity">
    <reaction evidence="1">
        <text>a quinol + 2 Fe(III)-[cytochrome c](out) = a quinone + 2 Fe(II)-[cytochrome c](out) + 2 H(+)(out)</text>
        <dbReference type="Rhea" id="RHEA:11484"/>
        <dbReference type="Rhea" id="RHEA-COMP:10350"/>
        <dbReference type="Rhea" id="RHEA-COMP:14399"/>
        <dbReference type="ChEBI" id="CHEBI:15378"/>
        <dbReference type="ChEBI" id="CHEBI:24646"/>
        <dbReference type="ChEBI" id="CHEBI:29033"/>
        <dbReference type="ChEBI" id="CHEBI:29034"/>
        <dbReference type="ChEBI" id="CHEBI:132124"/>
        <dbReference type="EC" id="7.1.1.8"/>
    </reaction>
</comment>
<comment type="cofactor">
    <cofactor evidence="6">
        <name>[2Fe-2S] cluster</name>
        <dbReference type="ChEBI" id="CHEBI:190135"/>
    </cofactor>
    <text evidence="3 6">Binds 1 [2Fe-2S] cluster per subunit. Fe-S cluster delivery to the Rieske protein is mediated by components of the iron sulfur (Fe-S) cluster assembly machinery that reside in the mitochondrial matrix (including HSC20 and LYRM7) (By similarity).</text>
</comment>
<comment type="subunit">
    <molecule>Cytochrome b-c1 complex subunit Rieske, mitochondrial</molecule>
    <text evidence="2 3">Component of the ubiquinol-cytochrome c oxidoreductase (cytochrome b-c1 complex, complex III, CIII), a multisubunit enzyme composed of 11 subunits. The complex is composed of 3 respiratory subunits cytochrome b, cytochrome c1 and Rieske protein UQCRFS1, 2 core protein subunits UQCRC1/QCR1 and UQCRC2/QCR2, and 6 low-molecular weight protein subunits UQCRH/QCR6, UQCRB/QCR7, UQCRQ/QCR8, UQCR10/QCR9, UQCR11/QCR10 and subunit 9, the cleavage product of Rieske protein UQCRFS1. The complex exists as an obligatory dimer and forms supercomplexes (SCs) in the inner mitochondrial membrane with NADH-ubiquinone oxidoreductase (complex I, CI) and cytochrome c oxidase (complex IV, CIV), resulting in different assemblies (supercomplex SCI(1)III(2)IV(1) and megacomplex MCI(2)III(2)IV(2)) (By similarity). Incorporation of the Rieske protein UQCRFS1 is the penultimate step in complex III assembly. Interacts with TTC19, which is involved in the clearance of UQCRFS1 fragments (By similarity).</text>
</comment>
<comment type="subunit">
    <molecule>Cytochrome b-c1 complex subunit 9</molecule>
    <text evidence="2">Component of the ubiquinol-cytochrome c oxidoreductase (cytochrome b-c1 complex, complex III, CIII). Subunit 9 corresponds to the mitochondrial targeting sequence (MTS) of Rieske protein UQCRFS1. It is retained after processing and incorporated inside complex III, where it remains bound to the complex and localizes between the 2 core subunits UQCRC1/QCR1 and UQCRC2/QCR2.</text>
</comment>
<comment type="subcellular location">
    <subcellularLocation>
        <location evidence="4">Mitochondrion inner membrane</location>
        <topology evidence="4">Single-pass membrane protein</topology>
    </subcellularLocation>
</comment>
<comment type="PTM">
    <text evidence="5">Proteolytic processing is necessary for the correct insertion of UQCRFS1 in the complex III dimer. Several fragments are generated during UQCRFS1 insertion, most probably due to the endogenous matrix-processing peptidase (MPP) activity of the 2 core protein subunits UQCRC1/QCR1 and UQCRC2/QCR2, which are homologous to the 2 mitochondrial-processing peptidase (MPP) subunits beta-MPP and alpha-MPP respectively. The action of the protease is also necessary for the clearance of the UQCRFS1 fragments.</text>
</comment>
<comment type="miscellaneous">
    <text>The Rieske protein is a high potential 2Fe-2S protein.</text>
</comment>
<comment type="similarity">
    <text evidence="7">Belongs to the Rieske iron-sulfur protein family.</text>
</comment>
<comment type="caution">
    <text evidence="2 3">Several peptides are generated during UQCRFS1 insertion. According to some authors, the identification of the transit peptide as the subunit 9, does not necessary imply that it must be considered as a structural subunit of the complex III dimer as additional fragments from UQCRFS1 are also present.</text>
</comment>